<reference key="1">
    <citation type="journal article" date="1999" name="Proc. Natl. Acad. Sci. U.S.A.">
        <title>The complete chloroplast DNA sequence of the green alga Nephroselmis olivacea: insights into the architecture of ancestral chloroplast genomes.</title>
        <authorList>
            <person name="Turmel M."/>
            <person name="Otis C."/>
            <person name="Lemieux C."/>
        </authorList>
    </citation>
    <scope>NUCLEOTIDE SEQUENCE [LARGE SCALE GENOMIC DNA]</scope>
    <source>
        <strain>NIES-484 / S-N-5-8</strain>
    </source>
</reference>
<dbReference type="EC" id="7.1.2.2" evidence="1"/>
<dbReference type="EMBL" id="AF137379">
    <property type="protein sequence ID" value="AAD54800.1"/>
    <property type="molecule type" value="Genomic_DNA"/>
</dbReference>
<dbReference type="RefSeq" id="NP_050829.1">
    <property type="nucleotide sequence ID" value="NC_000927.1"/>
</dbReference>
<dbReference type="SMR" id="Q9TL16"/>
<dbReference type="GeneID" id="802001"/>
<dbReference type="GO" id="GO:0009535">
    <property type="term" value="C:chloroplast thylakoid membrane"/>
    <property type="evidence" value="ECO:0007669"/>
    <property type="project" value="UniProtKB-SubCell"/>
</dbReference>
<dbReference type="GO" id="GO:0045259">
    <property type="term" value="C:proton-transporting ATP synthase complex"/>
    <property type="evidence" value="ECO:0007669"/>
    <property type="project" value="UniProtKB-KW"/>
</dbReference>
<dbReference type="GO" id="GO:0043531">
    <property type="term" value="F:ADP binding"/>
    <property type="evidence" value="ECO:0007669"/>
    <property type="project" value="TreeGrafter"/>
</dbReference>
<dbReference type="GO" id="GO:0005524">
    <property type="term" value="F:ATP binding"/>
    <property type="evidence" value="ECO:0007669"/>
    <property type="project" value="UniProtKB-UniRule"/>
</dbReference>
<dbReference type="GO" id="GO:0046933">
    <property type="term" value="F:proton-transporting ATP synthase activity, rotational mechanism"/>
    <property type="evidence" value="ECO:0007669"/>
    <property type="project" value="UniProtKB-UniRule"/>
</dbReference>
<dbReference type="CDD" id="cd18113">
    <property type="entry name" value="ATP-synt_F1_alpha_C"/>
    <property type="match status" value="1"/>
</dbReference>
<dbReference type="CDD" id="cd18116">
    <property type="entry name" value="ATP-synt_F1_alpha_N"/>
    <property type="match status" value="1"/>
</dbReference>
<dbReference type="CDD" id="cd01132">
    <property type="entry name" value="F1-ATPase_alpha_CD"/>
    <property type="match status" value="1"/>
</dbReference>
<dbReference type="FunFam" id="1.20.150.20:FF:000001">
    <property type="entry name" value="ATP synthase subunit alpha"/>
    <property type="match status" value="1"/>
</dbReference>
<dbReference type="FunFam" id="2.40.30.20:FF:000001">
    <property type="entry name" value="ATP synthase subunit alpha"/>
    <property type="match status" value="1"/>
</dbReference>
<dbReference type="FunFam" id="3.40.50.300:FF:000002">
    <property type="entry name" value="ATP synthase subunit alpha"/>
    <property type="match status" value="1"/>
</dbReference>
<dbReference type="Gene3D" id="2.40.30.20">
    <property type="match status" value="1"/>
</dbReference>
<dbReference type="Gene3D" id="1.20.150.20">
    <property type="entry name" value="ATP synthase alpha/beta chain, C-terminal domain"/>
    <property type="match status" value="1"/>
</dbReference>
<dbReference type="Gene3D" id="3.40.50.300">
    <property type="entry name" value="P-loop containing nucleotide triphosphate hydrolases"/>
    <property type="match status" value="1"/>
</dbReference>
<dbReference type="HAMAP" id="MF_01346">
    <property type="entry name" value="ATP_synth_alpha_bact"/>
    <property type="match status" value="1"/>
</dbReference>
<dbReference type="InterPro" id="IPR023366">
    <property type="entry name" value="ATP_synth_asu-like_sf"/>
</dbReference>
<dbReference type="InterPro" id="IPR000793">
    <property type="entry name" value="ATP_synth_asu_C"/>
</dbReference>
<dbReference type="InterPro" id="IPR038376">
    <property type="entry name" value="ATP_synth_asu_C_sf"/>
</dbReference>
<dbReference type="InterPro" id="IPR033732">
    <property type="entry name" value="ATP_synth_F1_a_nt-bd_dom"/>
</dbReference>
<dbReference type="InterPro" id="IPR005294">
    <property type="entry name" value="ATP_synth_F1_asu"/>
</dbReference>
<dbReference type="InterPro" id="IPR020003">
    <property type="entry name" value="ATPase_a/bsu_AS"/>
</dbReference>
<dbReference type="InterPro" id="IPR004100">
    <property type="entry name" value="ATPase_F1/V1/A1_a/bsu_N"/>
</dbReference>
<dbReference type="InterPro" id="IPR036121">
    <property type="entry name" value="ATPase_F1/V1/A1_a/bsu_N_sf"/>
</dbReference>
<dbReference type="InterPro" id="IPR000194">
    <property type="entry name" value="ATPase_F1/V1/A1_a/bsu_nucl-bd"/>
</dbReference>
<dbReference type="InterPro" id="IPR027417">
    <property type="entry name" value="P-loop_NTPase"/>
</dbReference>
<dbReference type="NCBIfam" id="TIGR00962">
    <property type="entry name" value="atpA"/>
    <property type="match status" value="1"/>
</dbReference>
<dbReference type="NCBIfam" id="NF009884">
    <property type="entry name" value="PRK13343.1"/>
    <property type="match status" value="1"/>
</dbReference>
<dbReference type="PANTHER" id="PTHR48082">
    <property type="entry name" value="ATP SYNTHASE SUBUNIT ALPHA, MITOCHONDRIAL"/>
    <property type="match status" value="1"/>
</dbReference>
<dbReference type="PANTHER" id="PTHR48082:SF2">
    <property type="entry name" value="ATP SYNTHASE SUBUNIT ALPHA, MITOCHONDRIAL"/>
    <property type="match status" value="1"/>
</dbReference>
<dbReference type="Pfam" id="PF00006">
    <property type="entry name" value="ATP-synt_ab"/>
    <property type="match status" value="1"/>
</dbReference>
<dbReference type="Pfam" id="PF00306">
    <property type="entry name" value="ATP-synt_ab_C"/>
    <property type="match status" value="1"/>
</dbReference>
<dbReference type="Pfam" id="PF02874">
    <property type="entry name" value="ATP-synt_ab_N"/>
    <property type="match status" value="1"/>
</dbReference>
<dbReference type="PIRSF" id="PIRSF039088">
    <property type="entry name" value="F_ATPase_subunit_alpha"/>
    <property type="match status" value="1"/>
</dbReference>
<dbReference type="SUPFAM" id="SSF47917">
    <property type="entry name" value="C-terminal domain of alpha and beta subunits of F1 ATP synthase"/>
    <property type="match status" value="1"/>
</dbReference>
<dbReference type="SUPFAM" id="SSF50615">
    <property type="entry name" value="N-terminal domain of alpha and beta subunits of F1 ATP synthase"/>
    <property type="match status" value="1"/>
</dbReference>
<dbReference type="SUPFAM" id="SSF52540">
    <property type="entry name" value="P-loop containing nucleoside triphosphate hydrolases"/>
    <property type="match status" value="1"/>
</dbReference>
<dbReference type="PROSITE" id="PS00152">
    <property type="entry name" value="ATPASE_ALPHA_BETA"/>
    <property type="match status" value="1"/>
</dbReference>
<geneLocation type="chloroplast"/>
<organism>
    <name type="scientific">Nephroselmis olivacea</name>
    <name type="common">Green alga</name>
    <dbReference type="NCBI Taxonomy" id="31312"/>
    <lineage>
        <taxon>Eukaryota</taxon>
        <taxon>Viridiplantae</taxon>
        <taxon>Chlorophyta</taxon>
        <taxon>Nephroselmidophyceae</taxon>
        <taxon>Nephroselmidales</taxon>
        <taxon>Nephroselmidaceae</taxon>
        <taxon>Nephroselmis</taxon>
    </lineage>
</organism>
<accession>Q9TL16</accession>
<comment type="function">
    <text>Produces ATP from ADP in the presence of a proton gradient across the membrane. The alpha chain is a regulatory subunit.</text>
</comment>
<comment type="catalytic activity">
    <reaction evidence="1">
        <text>ATP + H2O + 4 H(+)(in) = ADP + phosphate + 5 H(+)(out)</text>
        <dbReference type="Rhea" id="RHEA:57720"/>
        <dbReference type="ChEBI" id="CHEBI:15377"/>
        <dbReference type="ChEBI" id="CHEBI:15378"/>
        <dbReference type="ChEBI" id="CHEBI:30616"/>
        <dbReference type="ChEBI" id="CHEBI:43474"/>
        <dbReference type="ChEBI" id="CHEBI:456216"/>
        <dbReference type="EC" id="7.1.2.2"/>
    </reaction>
</comment>
<comment type="subunit">
    <text evidence="1">F-type ATPases have 2 components, CF(1) - the catalytic core - and CF(0) - the membrane proton channel. CF(1) has five subunits: alpha(3), beta(3), gamma(1), delta(1), epsilon(1). CF(0) has four main subunits: a, b, b' and c.</text>
</comment>
<comment type="subcellular location">
    <subcellularLocation>
        <location evidence="1">Plastid</location>
        <location evidence="1">Chloroplast thylakoid membrane</location>
        <topology evidence="1">Peripheral membrane protein</topology>
    </subcellularLocation>
</comment>
<comment type="similarity">
    <text evidence="1">Belongs to the ATPase alpha/beta chains family.</text>
</comment>
<proteinExistence type="inferred from homology"/>
<gene>
    <name evidence="1" type="primary">atpA</name>
</gene>
<sequence length="501" mass="53595">MVKIRPDEISNIIRQQIEQYSQEVKVVSVGTVLQVGDGIARIYGLEKVMAGELLEFEDGTVGIALNLEADNVGAVLMGSGLSIQEGSAVKATGKIAQVPVGEAFLGRVVNALARPIDGKGDIASKESRLLEGPAPGIIERRSVYEPMQTGLIAIDAMIPIGRGQRELIIGDRQTGKTAIATDAIVNQKGSGVICVYVAIGQKASSVAQIVTTLQEKDAMRYTIIVSETADSPATLQYLAPYTGAALAEYFMYSGRHTLVIYDDLSKQAQAYREMSLLLRRPPGREAYPGDVFYLHSRLLERAAKLSDALGEGSMTALPVIETQGGDVSAYIPTNVISITDGQIFLSADIFNAGIRPAINVGISVSRVGSAAQVKAMKQVASKLKLELAQFSELEAFAQFSSDLDAATQAQLARGVRLRELLKQAQSEPLSVADQVATIYTGTNGYLDDLAPTQVRAFLSALRSYLATSKPKYAQIMAANVFTPEAESLVKEAIAETKASFK</sequence>
<feature type="chain" id="PRO_0000144382" description="ATP synthase subunit alpha, chloroplastic">
    <location>
        <begin position="1"/>
        <end position="501"/>
    </location>
</feature>
<feature type="binding site" evidence="1">
    <location>
        <begin position="170"/>
        <end position="177"/>
    </location>
    <ligand>
        <name>ATP</name>
        <dbReference type="ChEBI" id="CHEBI:30616"/>
    </ligand>
</feature>
<feature type="site" description="Required for activity" evidence="1">
    <location>
        <position position="363"/>
    </location>
</feature>
<name>ATPA_NEPOL</name>
<protein>
    <recommendedName>
        <fullName evidence="1">ATP synthase subunit alpha, chloroplastic</fullName>
        <ecNumber evidence="1">7.1.2.2</ecNumber>
    </recommendedName>
    <alternativeName>
        <fullName evidence="1">ATP synthase F1 sector subunit alpha</fullName>
    </alternativeName>
    <alternativeName>
        <fullName evidence="1">F-ATPase subunit alpha</fullName>
    </alternativeName>
</protein>
<keyword id="KW-0066">ATP synthesis</keyword>
<keyword id="KW-0067">ATP-binding</keyword>
<keyword id="KW-0139">CF(1)</keyword>
<keyword id="KW-0150">Chloroplast</keyword>
<keyword id="KW-0375">Hydrogen ion transport</keyword>
<keyword id="KW-0406">Ion transport</keyword>
<keyword id="KW-0472">Membrane</keyword>
<keyword id="KW-0547">Nucleotide-binding</keyword>
<keyword id="KW-0934">Plastid</keyword>
<keyword id="KW-0793">Thylakoid</keyword>
<keyword id="KW-1278">Translocase</keyword>
<keyword id="KW-0813">Transport</keyword>
<evidence type="ECO:0000255" key="1">
    <source>
        <dbReference type="HAMAP-Rule" id="MF_01346"/>
    </source>
</evidence>